<protein>
    <recommendedName>
        <fullName>Protein tweety homolog 1</fullName>
    </recommendedName>
</protein>
<reference key="1">
    <citation type="journal article" date="1998" name="Science">
        <title>Genome sequence of the nematode C. elegans: a platform for investigating biology.</title>
        <authorList>
            <consortium name="The C. elegans sequencing consortium"/>
        </authorList>
    </citation>
    <scope>NUCLEOTIDE SEQUENCE [LARGE SCALE GENOMIC DNA]</scope>
    <scope>ALTERNATIVE SPLICING</scope>
    <source>
        <strain>Bristol N2</strain>
    </source>
</reference>
<reference key="2">
    <citation type="journal article" date="2005" name="Glycobiology">
        <title>Identification of the hydrophobic glycoproteins of Caenorhabditis elegans.</title>
        <authorList>
            <person name="Fan X."/>
            <person name="She Y.-M."/>
            <person name="Bagshaw R.D."/>
            <person name="Callahan J.W."/>
            <person name="Schachter H."/>
            <person name="Mahuran D.J."/>
        </authorList>
    </citation>
    <scope>GLYCOSYLATION [LARGE SCALE ANALYSIS] AT ASN-142</scope>
    <scope>IDENTIFICATION BY MASS SPECTROMETRY</scope>
</reference>
<reference key="3">
    <citation type="journal article" date="2007" name="Mol. Cell. Proteomics">
        <title>Proteomics reveals N-linked glycoprotein diversity in Caenorhabditis elegans and suggests an atypical translocation mechanism for integral membrane proteins.</title>
        <authorList>
            <person name="Kaji H."/>
            <person name="Kamiie J."/>
            <person name="Kawakami H."/>
            <person name="Kido K."/>
            <person name="Yamauchi Y."/>
            <person name="Shinkawa T."/>
            <person name="Taoka M."/>
            <person name="Takahashi N."/>
            <person name="Isobe T."/>
        </authorList>
    </citation>
    <scope>GLYCOSYLATION [LARGE SCALE ANALYSIS] AT ASN-163 AND ASN-176</scope>
    <scope>IDENTIFICATION BY MASS SPECTROMETRY</scope>
    <source>
        <strain>Bristol N2</strain>
    </source>
</reference>
<feature type="chain" id="PRO_0000312255" description="Protein tweety homolog 1">
    <location>
        <begin position="1"/>
        <end position="519"/>
    </location>
</feature>
<feature type="topological domain" description="Extracellular" evidence="2">
    <location>
        <begin position="1"/>
        <end position="42"/>
    </location>
</feature>
<feature type="transmembrane region" description="Helical; Name=1" evidence="2">
    <location>
        <begin position="43"/>
        <end position="63"/>
    </location>
</feature>
<feature type="topological domain" description="Cytoplasmic" evidence="2">
    <location>
        <begin position="64"/>
        <end position="82"/>
    </location>
</feature>
<feature type="transmembrane region" description="Helical; Name=2" evidence="2">
    <location>
        <begin position="83"/>
        <end position="103"/>
    </location>
</feature>
<feature type="topological domain" description="Extracellular" evidence="2">
    <location>
        <begin position="104"/>
        <end position="217"/>
    </location>
</feature>
<feature type="transmembrane region" description="Helical; Name=3" evidence="2">
    <location>
        <begin position="218"/>
        <end position="238"/>
    </location>
</feature>
<feature type="topological domain" description="Cytoplasmic" evidence="2">
    <location>
        <begin position="239"/>
        <end position="245"/>
    </location>
</feature>
<feature type="transmembrane region" description="Helical; Name=4" evidence="2">
    <location>
        <begin position="246"/>
        <end position="266"/>
    </location>
</feature>
<feature type="topological domain" description="Extracellular" evidence="2">
    <location>
        <begin position="267"/>
        <end position="395"/>
    </location>
</feature>
<feature type="transmembrane region" description="Helical; Name=5" evidence="2">
    <location>
        <begin position="396"/>
        <end position="416"/>
    </location>
</feature>
<feature type="topological domain" description="Cytoplasmic" evidence="2">
    <location>
        <begin position="417"/>
        <end position="519"/>
    </location>
</feature>
<feature type="region of interest" description="Disordered" evidence="3">
    <location>
        <begin position="459"/>
        <end position="485"/>
    </location>
</feature>
<feature type="glycosylation site" description="N-linked (GlcNAc...) asparagine" evidence="4">
    <location>
        <position position="142"/>
    </location>
</feature>
<feature type="glycosylation site" description="N-linked (GlcNAc...) asparagine" evidence="5">
    <location>
        <position position="163"/>
    </location>
</feature>
<feature type="glycosylation site" description="N-linked (GlcNAc...) asparagine" evidence="5">
    <location>
        <position position="176"/>
    </location>
</feature>
<feature type="glycosylation site" description="N-linked (GlcNAc...) asparagine" evidence="2">
    <location>
        <position position="328"/>
    </location>
</feature>
<feature type="glycosylation site" description="N-linked (GlcNAc...) asparagine" evidence="2">
    <location>
        <position position="341"/>
    </location>
</feature>
<feature type="glycosylation site" description="N-linked (GlcNAc...) asparagine" evidence="2">
    <location>
        <position position="348"/>
    </location>
</feature>
<feature type="glycosylation site" description="N-linked (GlcNAc...) asparagine" evidence="2">
    <location>
        <position position="389"/>
    </location>
</feature>
<feature type="splice variant" id="VSP_029773" description="In isoform b." evidence="6">
    <original>FMLGVCLFANEHVNR</original>
    <variation>DKLFAFVIIMPIARV</variation>
    <location>
        <begin position="96"/>
        <end position="110"/>
    </location>
</feature>
<feature type="splice variant" id="VSP_029774" description="In isoform b." evidence="6">
    <location>
        <begin position="111"/>
        <end position="519"/>
    </location>
</feature>
<feature type="splice variant" id="VSP_029775" description="In isoform c." evidence="6">
    <location>
        <begin position="464"/>
        <end position="497"/>
    </location>
</feature>
<accession>Q20332</accession>
<accession>Q7JM69</accession>
<accession>Q8MQ53</accession>
<accession>Q9U3F6</accession>
<dbReference type="EMBL" id="Z66562">
    <property type="protein sequence ID" value="CAB60289.1"/>
    <property type="molecule type" value="Genomic_DNA"/>
</dbReference>
<dbReference type="EMBL" id="Z66562">
    <property type="protein sequence ID" value="CAA91464.1"/>
    <property type="molecule type" value="Genomic_DNA"/>
</dbReference>
<dbReference type="EMBL" id="Z66562">
    <property type="protein sequence ID" value="CAD44123.1"/>
    <property type="molecule type" value="Genomic_DNA"/>
</dbReference>
<dbReference type="PIR" id="T22091">
    <property type="entry name" value="T22091"/>
</dbReference>
<dbReference type="RefSeq" id="NP_001379257.1">
    <molecule id="Q20332-2"/>
    <property type="nucleotide sequence ID" value="NM_001392843.1"/>
</dbReference>
<dbReference type="RefSeq" id="NP_509903.1">
    <molecule id="Q20332-1"/>
    <property type="nucleotide sequence ID" value="NM_077502.8"/>
</dbReference>
<dbReference type="RefSeq" id="NP_509904.1">
    <property type="nucleotide sequence ID" value="NM_077503.4"/>
</dbReference>
<dbReference type="RefSeq" id="NP_741904.1">
    <molecule id="Q20332-3"/>
    <property type="nucleotide sequence ID" value="NM_171973.9"/>
</dbReference>
<dbReference type="SMR" id="Q20332"/>
<dbReference type="BioGRID" id="46237">
    <property type="interactions" value="1"/>
</dbReference>
<dbReference type="DIP" id="DIP-27409N"/>
<dbReference type="FunCoup" id="Q20332">
    <property type="interactions" value="591"/>
</dbReference>
<dbReference type="STRING" id="6239.F42E11.2a.1"/>
<dbReference type="GlyCosmos" id="Q20332">
    <property type="glycosylation" value="7 sites, No reported glycans"/>
</dbReference>
<dbReference type="iPTMnet" id="Q20332"/>
<dbReference type="PaxDb" id="6239-F42E11.2a"/>
<dbReference type="PeptideAtlas" id="Q20332"/>
<dbReference type="EnsemblMetazoa" id="F42E11.2a.1">
    <molecule id="Q20332-1"/>
    <property type="protein sequence ID" value="F42E11.2a.1"/>
    <property type="gene ID" value="WBGene00009632"/>
</dbReference>
<dbReference type="EnsemblMetazoa" id="F42E11.2b.1">
    <molecule id="Q20332-2"/>
    <property type="protein sequence ID" value="F42E11.2b.1"/>
    <property type="gene ID" value="WBGene00009632"/>
</dbReference>
<dbReference type="EnsemblMetazoa" id="F42E11.2c.1">
    <molecule id="Q20332-3"/>
    <property type="protein sequence ID" value="F42E11.2c.1"/>
    <property type="gene ID" value="WBGene00009632"/>
</dbReference>
<dbReference type="GeneID" id="181328"/>
<dbReference type="KEGG" id="cel:CELE_F42E11.2"/>
<dbReference type="UCSC" id="F42E11.2c">
    <molecule id="Q20332-1"/>
    <property type="organism name" value="c. elegans"/>
</dbReference>
<dbReference type="AGR" id="WB:WBGene00009632"/>
<dbReference type="CTD" id="181328"/>
<dbReference type="WormBase" id="F42E11.2a">
    <molecule id="Q20332-1"/>
    <property type="protein sequence ID" value="CE03309"/>
    <property type="gene ID" value="WBGene00009632"/>
    <property type="gene designation" value="ttyh-1"/>
</dbReference>
<dbReference type="WormBase" id="F42E11.2b">
    <molecule id="Q20332-2"/>
    <property type="protein sequence ID" value="CE23715"/>
    <property type="gene ID" value="WBGene00009632"/>
    <property type="gene designation" value="ttyh-1"/>
</dbReference>
<dbReference type="WormBase" id="F42E11.2c">
    <molecule id="Q20332-3"/>
    <property type="protein sequence ID" value="CE31512"/>
    <property type="gene ID" value="WBGene00009632"/>
    <property type="gene designation" value="ttyh-1"/>
</dbReference>
<dbReference type="eggNOG" id="KOG4433">
    <property type="taxonomic scope" value="Eukaryota"/>
</dbReference>
<dbReference type="GeneTree" id="ENSGT00950000183060"/>
<dbReference type="InParanoid" id="Q20332"/>
<dbReference type="OMA" id="MRATYMS"/>
<dbReference type="OrthoDB" id="187568at2759"/>
<dbReference type="PhylomeDB" id="Q20332"/>
<dbReference type="Reactome" id="R-CEL-2672351">
    <property type="pathway name" value="Stimuli-sensing channels"/>
</dbReference>
<dbReference type="PRO" id="PR:Q20332"/>
<dbReference type="Proteomes" id="UP000001940">
    <property type="component" value="Chromosome X"/>
</dbReference>
<dbReference type="Bgee" id="WBGene00009632">
    <property type="expression patterns" value="Expressed in pharyngeal muscle cell (C elegans) and 3 other cell types or tissues"/>
</dbReference>
<dbReference type="GO" id="GO:0034707">
    <property type="term" value="C:chloride channel complex"/>
    <property type="evidence" value="ECO:0007669"/>
    <property type="project" value="UniProtKB-KW"/>
</dbReference>
<dbReference type="GO" id="GO:0005886">
    <property type="term" value="C:plasma membrane"/>
    <property type="evidence" value="ECO:0000318"/>
    <property type="project" value="GO_Central"/>
</dbReference>
<dbReference type="GO" id="GO:0005229">
    <property type="term" value="F:intracellularly calcium-gated chloride channel activity"/>
    <property type="evidence" value="ECO:0000318"/>
    <property type="project" value="GO_Central"/>
</dbReference>
<dbReference type="GO" id="GO:0072320">
    <property type="term" value="F:volume-sensitive chloride channel activity"/>
    <property type="evidence" value="ECO:0000318"/>
    <property type="project" value="GO_Central"/>
</dbReference>
<dbReference type="CDD" id="cd07912">
    <property type="entry name" value="Tweety_N"/>
    <property type="match status" value="1"/>
</dbReference>
<dbReference type="Gene3D" id="1.20.140.150">
    <property type="match status" value="1"/>
</dbReference>
<dbReference type="InterPro" id="IPR006990">
    <property type="entry name" value="Tweety"/>
</dbReference>
<dbReference type="PANTHER" id="PTHR12424:SF8">
    <property type="entry name" value="PROTEIN TWEETY"/>
    <property type="match status" value="1"/>
</dbReference>
<dbReference type="PANTHER" id="PTHR12424">
    <property type="entry name" value="TWEETY-RELATED"/>
    <property type="match status" value="1"/>
</dbReference>
<dbReference type="Pfam" id="PF04906">
    <property type="entry name" value="Tweety"/>
    <property type="match status" value="1"/>
</dbReference>
<evidence type="ECO:0000250" key="1"/>
<evidence type="ECO:0000255" key="2"/>
<evidence type="ECO:0000256" key="3">
    <source>
        <dbReference type="SAM" id="MobiDB-lite"/>
    </source>
</evidence>
<evidence type="ECO:0000269" key="4">
    <source>
    </source>
</evidence>
<evidence type="ECO:0000269" key="5">
    <source>
    </source>
</evidence>
<evidence type="ECO:0000305" key="6"/>
<keyword id="KW-0025">Alternative splicing</keyword>
<keyword id="KW-1003">Cell membrane</keyword>
<keyword id="KW-0868">Chloride</keyword>
<keyword id="KW-0869">Chloride channel</keyword>
<keyword id="KW-0325">Glycoprotein</keyword>
<keyword id="KW-0407">Ion channel</keyword>
<keyword id="KW-0406">Ion transport</keyword>
<keyword id="KW-0472">Membrane</keyword>
<keyword id="KW-1185">Reference proteome</keyword>
<keyword id="KW-0812">Transmembrane</keyword>
<keyword id="KW-1133">Transmembrane helix</keyword>
<keyword id="KW-0813">Transport</keyword>
<sequence>MTFASFLINFYSVIPRLNFKFHWTNDVFNLEWSSEYFQALALVACLGAAVSLLLLVTIIIVWICQACHKNETTGKTRRRVRRLSTVLFIISVLCFFMLGVCLFANEHVNRGMSISINSIINTKKSYQISTAQISQFQEAALNTTVHLKNLEDTVHVESKKTKNATIVQQIDQILTNITDEIDIIAKNGKLFQAKHGDDIGKLEKIRKVLSLYESERWAFLVILLSITMVVLFTGVVAFCKQSKKGAVVFSAIGFFIFVVVWLLISISLPLTIALADFCRDGDQVTRKNLGNLYETVQFYNTCVPVTTHDNLPLPVARHVALLNNIPANKSQLDRLMEVAFNSSAAIVNSSSAVGDDITKMLKLAGAVSSSSSCYVFHDDVVNFYYGTCNQSVAGMSIYMLSILLLGVFLFILLIVVSKTWNLFSRLPNEYTEVDEDDPFFPRGVNDSTIPVDIYGTHVYNPRTRDRTEPSTNTTSGTADEPNAPLWSQNVTVPLVSNSMSRQPFMSDHPYNNYEDRYNM</sequence>
<organism>
    <name type="scientific">Caenorhabditis elegans</name>
    <dbReference type="NCBI Taxonomy" id="6239"/>
    <lineage>
        <taxon>Eukaryota</taxon>
        <taxon>Metazoa</taxon>
        <taxon>Ecdysozoa</taxon>
        <taxon>Nematoda</taxon>
        <taxon>Chromadorea</taxon>
        <taxon>Rhabditida</taxon>
        <taxon>Rhabditina</taxon>
        <taxon>Rhabditomorpha</taxon>
        <taxon>Rhabditoidea</taxon>
        <taxon>Rhabditidae</taxon>
        <taxon>Peloderinae</taxon>
        <taxon>Caenorhabditis</taxon>
    </lineage>
</organism>
<gene>
    <name type="primary">ttyh-1</name>
    <name type="ORF">F42E11.2</name>
</gene>
<proteinExistence type="evidence at protein level"/>
<comment type="function">
    <text evidence="1">Probable chloride channel.</text>
</comment>
<comment type="subcellular location">
    <subcellularLocation>
        <location evidence="1">Cell membrane</location>
        <topology evidence="1">Multi-pass membrane protein</topology>
    </subcellularLocation>
</comment>
<comment type="alternative products">
    <event type="alternative splicing"/>
    <isoform>
        <id>Q20332-1</id>
        <name>a</name>
        <sequence type="displayed"/>
    </isoform>
    <isoform>
        <id>Q20332-2</id>
        <name>b</name>
        <sequence type="described" ref="VSP_029773 VSP_029774"/>
    </isoform>
    <isoform>
        <id>Q20332-3</id>
        <name>c</name>
        <sequence type="described" ref="VSP_029775"/>
    </isoform>
</comment>
<comment type="similarity">
    <text evidence="6">Belongs to the tweety family.</text>
</comment>
<name>TTYH1_CAEEL</name>